<sequence length="156" mass="17652">MSRKNQAPKREVLPDPLYNSKIVTRLINRVMLDGKRGTAATIVYDAFSAIKEATGNDALEVFETAMDNIMPVLEVRARRVGGSNYQVPVEVRPERRTTLGLRWLVNASRARGEHTMKDRLAKEIMDAANNTGASVKKREDTHKMAEANRAFAHFRW</sequence>
<evidence type="ECO:0000255" key="1">
    <source>
        <dbReference type="HAMAP-Rule" id="MF_00480"/>
    </source>
</evidence>
<evidence type="ECO:0000305" key="2"/>
<reference key="1">
    <citation type="journal article" date="2002" name="Proc. Natl. Acad. Sci. U.S.A.">
        <title>Genome sequence of a serotype M3 strain of group A Streptococcus: phage-encoded toxins, the high-virulence phenotype, and clone emergence.</title>
        <authorList>
            <person name="Beres S.B."/>
            <person name="Sylva G.L."/>
            <person name="Barbian K.D."/>
            <person name="Lei B."/>
            <person name="Hoff J.S."/>
            <person name="Mammarella N.D."/>
            <person name="Liu M.-Y."/>
            <person name="Smoot J.C."/>
            <person name="Porcella S.F."/>
            <person name="Parkins L.D."/>
            <person name="Campbell D.S."/>
            <person name="Smith T.M."/>
            <person name="McCormick J.K."/>
            <person name="Leung D.Y.M."/>
            <person name="Schlievert P.M."/>
            <person name="Musser J.M."/>
        </authorList>
    </citation>
    <scope>NUCLEOTIDE SEQUENCE [LARGE SCALE GENOMIC DNA]</scope>
    <source>
        <strain>ATCC BAA-595 / MGAS315</strain>
    </source>
</reference>
<proteinExistence type="inferred from homology"/>
<organism>
    <name type="scientific">Streptococcus pyogenes serotype M3 (strain ATCC BAA-595 / MGAS315)</name>
    <dbReference type="NCBI Taxonomy" id="198466"/>
    <lineage>
        <taxon>Bacteria</taxon>
        <taxon>Bacillati</taxon>
        <taxon>Bacillota</taxon>
        <taxon>Bacilli</taxon>
        <taxon>Lactobacillales</taxon>
        <taxon>Streptococcaceae</taxon>
        <taxon>Streptococcus</taxon>
    </lineage>
</organism>
<accession>P0DE98</accession>
<accession>P59062</accession>
<comment type="function">
    <text evidence="1">One of the primary rRNA binding proteins, it binds directly to 16S rRNA where it nucleates assembly of the head domain of the 30S subunit. Is located at the subunit interface close to the decoding center, probably blocks exit of the E-site tRNA.</text>
</comment>
<comment type="subunit">
    <text evidence="1">Part of the 30S ribosomal subunit. Contacts proteins S9 and S11.</text>
</comment>
<comment type="similarity">
    <text evidence="1">Belongs to the universal ribosomal protein uS7 family.</text>
</comment>
<gene>
    <name evidence="1" type="primary">rpsG</name>
    <name type="ordered locus">SpyM3_0199</name>
</gene>
<dbReference type="EMBL" id="AE014074">
    <property type="protein sequence ID" value="AAM78806.1"/>
    <property type="molecule type" value="Genomic_DNA"/>
</dbReference>
<dbReference type="RefSeq" id="WP_002986047.1">
    <property type="nucleotide sequence ID" value="NC_004070.1"/>
</dbReference>
<dbReference type="SMR" id="P0DE98"/>
<dbReference type="GeneID" id="69900198"/>
<dbReference type="KEGG" id="spg:SpyM3_0199"/>
<dbReference type="HOGENOM" id="CLU_072226_1_1_9"/>
<dbReference type="Proteomes" id="UP000000564">
    <property type="component" value="Chromosome"/>
</dbReference>
<dbReference type="GO" id="GO:0015935">
    <property type="term" value="C:small ribosomal subunit"/>
    <property type="evidence" value="ECO:0007669"/>
    <property type="project" value="InterPro"/>
</dbReference>
<dbReference type="GO" id="GO:0019843">
    <property type="term" value="F:rRNA binding"/>
    <property type="evidence" value="ECO:0007669"/>
    <property type="project" value="UniProtKB-UniRule"/>
</dbReference>
<dbReference type="GO" id="GO:0003735">
    <property type="term" value="F:structural constituent of ribosome"/>
    <property type="evidence" value="ECO:0007669"/>
    <property type="project" value="InterPro"/>
</dbReference>
<dbReference type="GO" id="GO:0000049">
    <property type="term" value="F:tRNA binding"/>
    <property type="evidence" value="ECO:0007669"/>
    <property type="project" value="UniProtKB-UniRule"/>
</dbReference>
<dbReference type="GO" id="GO:0006412">
    <property type="term" value="P:translation"/>
    <property type="evidence" value="ECO:0007669"/>
    <property type="project" value="UniProtKB-UniRule"/>
</dbReference>
<dbReference type="CDD" id="cd14869">
    <property type="entry name" value="uS7_Bacteria"/>
    <property type="match status" value="1"/>
</dbReference>
<dbReference type="FunFam" id="1.10.455.10:FF:000001">
    <property type="entry name" value="30S ribosomal protein S7"/>
    <property type="match status" value="1"/>
</dbReference>
<dbReference type="Gene3D" id="1.10.455.10">
    <property type="entry name" value="Ribosomal protein S7 domain"/>
    <property type="match status" value="1"/>
</dbReference>
<dbReference type="HAMAP" id="MF_00480_B">
    <property type="entry name" value="Ribosomal_uS7_B"/>
    <property type="match status" value="1"/>
</dbReference>
<dbReference type="InterPro" id="IPR000235">
    <property type="entry name" value="Ribosomal_uS7"/>
</dbReference>
<dbReference type="InterPro" id="IPR005717">
    <property type="entry name" value="Ribosomal_uS7_bac/org-type"/>
</dbReference>
<dbReference type="InterPro" id="IPR020606">
    <property type="entry name" value="Ribosomal_uS7_CS"/>
</dbReference>
<dbReference type="InterPro" id="IPR023798">
    <property type="entry name" value="Ribosomal_uS7_dom"/>
</dbReference>
<dbReference type="InterPro" id="IPR036823">
    <property type="entry name" value="Ribosomal_uS7_dom_sf"/>
</dbReference>
<dbReference type="NCBIfam" id="TIGR01029">
    <property type="entry name" value="rpsG_bact"/>
    <property type="match status" value="1"/>
</dbReference>
<dbReference type="PANTHER" id="PTHR11205">
    <property type="entry name" value="RIBOSOMAL PROTEIN S7"/>
    <property type="match status" value="1"/>
</dbReference>
<dbReference type="Pfam" id="PF00177">
    <property type="entry name" value="Ribosomal_S7"/>
    <property type="match status" value="1"/>
</dbReference>
<dbReference type="PIRSF" id="PIRSF002122">
    <property type="entry name" value="RPS7p_RPS7a_RPS5e_RPS7o"/>
    <property type="match status" value="1"/>
</dbReference>
<dbReference type="SUPFAM" id="SSF47973">
    <property type="entry name" value="Ribosomal protein S7"/>
    <property type="match status" value="1"/>
</dbReference>
<dbReference type="PROSITE" id="PS00052">
    <property type="entry name" value="RIBOSOMAL_S7"/>
    <property type="match status" value="1"/>
</dbReference>
<name>RS7_STRP3</name>
<keyword id="KW-0687">Ribonucleoprotein</keyword>
<keyword id="KW-0689">Ribosomal protein</keyword>
<keyword id="KW-0694">RNA-binding</keyword>
<keyword id="KW-0699">rRNA-binding</keyword>
<keyword id="KW-0820">tRNA-binding</keyword>
<feature type="chain" id="PRO_0000124358" description="Small ribosomal subunit protein uS7">
    <location>
        <begin position="1"/>
        <end position="156"/>
    </location>
</feature>
<protein>
    <recommendedName>
        <fullName evidence="1">Small ribosomal subunit protein uS7</fullName>
    </recommendedName>
    <alternativeName>
        <fullName evidence="2">30S ribosomal protein S7</fullName>
    </alternativeName>
</protein>